<accession>Q04QM3</accession>
<feature type="chain" id="PRO_1000021294" description="Shikimate dehydrogenase (NADP(+))">
    <location>
        <begin position="1"/>
        <end position="290"/>
    </location>
</feature>
<feature type="active site" description="Proton acceptor" evidence="1">
    <location>
        <position position="72"/>
    </location>
</feature>
<feature type="binding site" evidence="1">
    <location>
        <begin position="22"/>
        <end position="24"/>
    </location>
    <ligand>
        <name>shikimate</name>
        <dbReference type="ChEBI" id="CHEBI:36208"/>
    </ligand>
</feature>
<feature type="binding site" evidence="1">
    <location>
        <position position="68"/>
    </location>
    <ligand>
        <name>shikimate</name>
        <dbReference type="ChEBI" id="CHEBI:36208"/>
    </ligand>
</feature>
<feature type="binding site" evidence="1">
    <location>
        <position position="93"/>
    </location>
    <ligand>
        <name>shikimate</name>
        <dbReference type="ChEBI" id="CHEBI:36208"/>
    </ligand>
</feature>
<feature type="binding site" evidence="1">
    <location>
        <position position="108"/>
    </location>
    <ligand>
        <name>shikimate</name>
        <dbReference type="ChEBI" id="CHEBI:36208"/>
    </ligand>
</feature>
<feature type="binding site" evidence="1">
    <location>
        <begin position="133"/>
        <end position="137"/>
    </location>
    <ligand>
        <name>NADP(+)</name>
        <dbReference type="ChEBI" id="CHEBI:58349"/>
    </ligand>
</feature>
<feature type="binding site" evidence="1">
    <location>
        <position position="228"/>
    </location>
    <ligand>
        <name>NADP(+)</name>
        <dbReference type="ChEBI" id="CHEBI:58349"/>
    </ligand>
</feature>
<feature type="binding site" evidence="1">
    <location>
        <position position="230"/>
    </location>
    <ligand>
        <name>shikimate</name>
        <dbReference type="ChEBI" id="CHEBI:36208"/>
    </ligand>
</feature>
<feature type="binding site" evidence="1">
    <location>
        <position position="251"/>
    </location>
    <ligand>
        <name>NADP(+)</name>
        <dbReference type="ChEBI" id="CHEBI:58349"/>
    </ligand>
</feature>
<proteinExistence type="inferred from homology"/>
<protein>
    <recommendedName>
        <fullName evidence="1">Shikimate dehydrogenase (NADP(+))</fullName>
        <shortName evidence="1">SDH</shortName>
        <ecNumber evidence="1">1.1.1.25</ecNumber>
    </recommendedName>
</protein>
<sequence>MNSKTNQTAKTFGIVGFPLSHSLSPLIHNSIYKDRGIDASYLVFETPELNSKTIQEFRNSGILGLSVTIPHKEKAFLLADKADSTSTIMKASNTLLIGPDSIHAYNTDGEGAYRSILELSPESLNVGNTVILGSGGSARGIAYNLAASGKIQNLFLCSRNEMTAKEICFLISKNSNVKMEHITQDSLFSRKEEISLVIHTTPLGMKGQAPGPFLSEKFFNPNMTLFDIVYNPLETPLVKAAKKAGAKIIPGSEMLLHQAMKQFELFTGISPNASDILKTRERLSQTLTNQ</sequence>
<gene>
    <name evidence="1" type="primary">aroE</name>
    <name type="ordered locus">LBJ_2329</name>
</gene>
<reference key="1">
    <citation type="journal article" date="2006" name="Proc. Natl. Acad. Sci. U.S.A.">
        <title>Genome reduction in Leptospira borgpetersenii reflects limited transmission potential.</title>
        <authorList>
            <person name="Bulach D.M."/>
            <person name="Zuerner R.L."/>
            <person name="Wilson P."/>
            <person name="Seemann T."/>
            <person name="McGrath A."/>
            <person name="Cullen P.A."/>
            <person name="Davis J."/>
            <person name="Johnson M."/>
            <person name="Kuczek E."/>
            <person name="Alt D.P."/>
            <person name="Peterson-Burch B."/>
            <person name="Coppel R.L."/>
            <person name="Rood J.I."/>
            <person name="Davies J.K."/>
            <person name="Adler B."/>
        </authorList>
    </citation>
    <scope>NUCLEOTIDE SEQUENCE [LARGE SCALE GENOMIC DNA]</scope>
    <source>
        <strain>JB197</strain>
    </source>
</reference>
<organism>
    <name type="scientific">Leptospira borgpetersenii serovar Hardjo-bovis (strain JB197)</name>
    <dbReference type="NCBI Taxonomy" id="355277"/>
    <lineage>
        <taxon>Bacteria</taxon>
        <taxon>Pseudomonadati</taxon>
        <taxon>Spirochaetota</taxon>
        <taxon>Spirochaetia</taxon>
        <taxon>Leptospirales</taxon>
        <taxon>Leptospiraceae</taxon>
        <taxon>Leptospira</taxon>
    </lineage>
</organism>
<keyword id="KW-0028">Amino-acid biosynthesis</keyword>
<keyword id="KW-0057">Aromatic amino acid biosynthesis</keyword>
<keyword id="KW-0521">NADP</keyword>
<keyword id="KW-0560">Oxidoreductase</keyword>
<evidence type="ECO:0000255" key="1">
    <source>
        <dbReference type="HAMAP-Rule" id="MF_00222"/>
    </source>
</evidence>
<comment type="function">
    <text evidence="1">Involved in the biosynthesis of the chorismate, which leads to the biosynthesis of aromatic amino acids. Catalyzes the reversible NADPH linked reduction of 3-dehydroshikimate (DHSA) to yield shikimate (SA).</text>
</comment>
<comment type="catalytic activity">
    <reaction evidence="1">
        <text>shikimate + NADP(+) = 3-dehydroshikimate + NADPH + H(+)</text>
        <dbReference type="Rhea" id="RHEA:17737"/>
        <dbReference type="ChEBI" id="CHEBI:15378"/>
        <dbReference type="ChEBI" id="CHEBI:16630"/>
        <dbReference type="ChEBI" id="CHEBI:36208"/>
        <dbReference type="ChEBI" id="CHEBI:57783"/>
        <dbReference type="ChEBI" id="CHEBI:58349"/>
        <dbReference type="EC" id="1.1.1.25"/>
    </reaction>
</comment>
<comment type="pathway">
    <text evidence="1">Metabolic intermediate biosynthesis; chorismate biosynthesis; chorismate from D-erythrose 4-phosphate and phosphoenolpyruvate: step 4/7.</text>
</comment>
<comment type="subunit">
    <text evidence="1">Homodimer.</text>
</comment>
<comment type="similarity">
    <text evidence="1">Belongs to the shikimate dehydrogenase family.</text>
</comment>
<dbReference type="EC" id="1.1.1.25" evidence="1"/>
<dbReference type="EMBL" id="CP000350">
    <property type="protein sequence ID" value="ABJ76797.1"/>
    <property type="molecule type" value="Genomic_DNA"/>
</dbReference>
<dbReference type="RefSeq" id="WP_011669648.1">
    <property type="nucleotide sequence ID" value="NC_008510.1"/>
</dbReference>
<dbReference type="SMR" id="Q04QM3"/>
<dbReference type="KEGG" id="lbj:LBJ_2329"/>
<dbReference type="HOGENOM" id="CLU_044063_0_0_12"/>
<dbReference type="UniPathway" id="UPA00053">
    <property type="reaction ID" value="UER00087"/>
</dbReference>
<dbReference type="Proteomes" id="UP000000656">
    <property type="component" value="Chromosome 1"/>
</dbReference>
<dbReference type="GO" id="GO:0005829">
    <property type="term" value="C:cytosol"/>
    <property type="evidence" value="ECO:0007669"/>
    <property type="project" value="TreeGrafter"/>
</dbReference>
<dbReference type="GO" id="GO:0050661">
    <property type="term" value="F:NADP binding"/>
    <property type="evidence" value="ECO:0007669"/>
    <property type="project" value="InterPro"/>
</dbReference>
<dbReference type="GO" id="GO:0004764">
    <property type="term" value="F:shikimate 3-dehydrogenase (NADP+) activity"/>
    <property type="evidence" value="ECO:0007669"/>
    <property type="project" value="UniProtKB-UniRule"/>
</dbReference>
<dbReference type="GO" id="GO:0008652">
    <property type="term" value="P:amino acid biosynthetic process"/>
    <property type="evidence" value="ECO:0007669"/>
    <property type="project" value="UniProtKB-KW"/>
</dbReference>
<dbReference type="GO" id="GO:0009073">
    <property type="term" value="P:aromatic amino acid family biosynthetic process"/>
    <property type="evidence" value="ECO:0007669"/>
    <property type="project" value="UniProtKB-KW"/>
</dbReference>
<dbReference type="GO" id="GO:0009423">
    <property type="term" value="P:chorismate biosynthetic process"/>
    <property type="evidence" value="ECO:0007669"/>
    <property type="project" value="UniProtKB-UniRule"/>
</dbReference>
<dbReference type="GO" id="GO:0019632">
    <property type="term" value="P:shikimate metabolic process"/>
    <property type="evidence" value="ECO:0007669"/>
    <property type="project" value="InterPro"/>
</dbReference>
<dbReference type="CDD" id="cd01065">
    <property type="entry name" value="NAD_bind_Shikimate_DH"/>
    <property type="match status" value="1"/>
</dbReference>
<dbReference type="Gene3D" id="3.40.50.10860">
    <property type="entry name" value="Leucine Dehydrogenase, chain A, domain 1"/>
    <property type="match status" value="1"/>
</dbReference>
<dbReference type="Gene3D" id="3.40.50.720">
    <property type="entry name" value="NAD(P)-binding Rossmann-like Domain"/>
    <property type="match status" value="1"/>
</dbReference>
<dbReference type="HAMAP" id="MF_00222">
    <property type="entry name" value="Shikimate_DH_AroE"/>
    <property type="match status" value="1"/>
</dbReference>
<dbReference type="InterPro" id="IPR046346">
    <property type="entry name" value="Aminoacid_DH-like_N_sf"/>
</dbReference>
<dbReference type="InterPro" id="IPR036291">
    <property type="entry name" value="NAD(P)-bd_dom_sf"/>
</dbReference>
<dbReference type="InterPro" id="IPR041121">
    <property type="entry name" value="SDH_C"/>
</dbReference>
<dbReference type="InterPro" id="IPR011342">
    <property type="entry name" value="Shikimate_DH"/>
</dbReference>
<dbReference type="InterPro" id="IPR013708">
    <property type="entry name" value="Shikimate_DH-bd_N"/>
</dbReference>
<dbReference type="InterPro" id="IPR022893">
    <property type="entry name" value="Shikimate_DH_fam"/>
</dbReference>
<dbReference type="NCBIfam" id="TIGR00507">
    <property type="entry name" value="aroE"/>
    <property type="match status" value="1"/>
</dbReference>
<dbReference type="PANTHER" id="PTHR21089:SF1">
    <property type="entry name" value="BIFUNCTIONAL 3-DEHYDROQUINATE DEHYDRATASE_SHIKIMATE DEHYDROGENASE, CHLOROPLASTIC"/>
    <property type="match status" value="1"/>
</dbReference>
<dbReference type="PANTHER" id="PTHR21089">
    <property type="entry name" value="SHIKIMATE DEHYDROGENASE"/>
    <property type="match status" value="1"/>
</dbReference>
<dbReference type="Pfam" id="PF18317">
    <property type="entry name" value="SDH_C"/>
    <property type="match status" value="1"/>
</dbReference>
<dbReference type="Pfam" id="PF08501">
    <property type="entry name" value="Shikimate_dh_N"/>
    <property type="match status" value="1"/>
</dbReference>
<dbReference type="SUPFAM" id="SSF53223">
    <property type="entry name" value="Aminoacid dehydrogenase-like, N-terminal domain"/>
    <property type="match status" value="1"/>
</dbReference>
<dbReference type="SUPFAM" id="SSF51735">
    <property type="entry name" value="NAD(P)-binding Rossmann-fold domains"/>
    <property type="match status" value="1"/>
</dbReference>
<name>AROE_LEPBJ</name>